<accession>A0KWL2</accession>
<evidence type="ECO:0000255" key="1">
    <source>
        <dbReference type="HAMAP-Rule" id="MF_01590"/>
    </source>
</evidence>
<keyword id="KW-0808">Transferase</keyword>
<keyword id="KW-0819">tRNA processing</keyword>
<proteinExistence type="inferred from homology"/>
<dbReference type="EC" id="2.5.1.-" evidence="1"/>
<dbReference type="EMBL" id="CP000469">
    <property type="protein sequence ID" value="ABK48181.1"/>
    <property type="molecule type" value="Genomic_DNA"/>
</dbReference>
<dbReference type="RefSeq" id="WP_011622666.1">
    <property type="nucleotide sequence ID" value="NC_008577.1"/>
</dbReference>
<dbReference type="SMR" id="A0KWL2"/>
<dbReference type="STRING" id="94122.Shewana3_1950"/>
<dbReference type="KEGG" id="shn:Shewana3_1950"/>
<dbReference type="eggNOG" id="COG0500">
    <property type="taxonomic scope" value="Bacteria"/>
</dbReference>
<dbReference type="HOGENOM" id="CLU_052665_0_0_6"/>
<dbReference type="OrthoDB" id="9773188at2"/>
<dbReference type="Proteomes" id="UP000002589">
    <property type="component" value="Chromosome"/>
</dbReference>
<dbReference type="GO" id="GO:0008168">
    <property type="term" value="F:methyltransferase activity"/>
    <property type="evidence" value="ECO:0007669"/>
    <property type="project" value="TreeGrafter"/>
</dbReference>
<dbReference type="GO" id="GO:0016765">
    <property type="term" value="F:transferase activity, transferring alkyl or aryl (other than methyl) groups"/>
    <property type="evidence" value="ECO:0007669"/>
    <property type="project" value="UniProtKB-UniRule"/>
</dbReference>
<dbReference type="GO" id="GO:0002098">
    <property type="term" value="P:tRNA wobble uridine modification"/>
    <property type="evidence" value="ECO:0007669"/>
    <property type="project" value="InterPro"/>
</dbReference>
<dbReference type="CDD" id="cd02440">
    <property type="entry name" value="AdoMet_MTases"/>
    <property type="match status" value="1"/>
</dbReference>
<dbReference type="Gene3D" id="3.40.50.150">
    <property type="entry name" value="Vaccinia Virus protein VP39"/>
    <property type="match status" value="1"/>
</dbReference>
<dbReference type="HAMAP" id="MF_01590">
    <property type="entry name" value="tRNA_carboxymethyltr_CmoB"/>
    <property type="match status" value="1"/>
</dbReference>
<dbReference type="InterPro" id="IPR010017">
    <property type="entry name" value="CmoB"/>
</dbReference>
<dbReference type="InterPro" id="IPR027555">
    <property type="entry name" value="Mo5U34_MeTrfas-like"/>
</dbReference>
<dbReference type="InterPro" id="IPR029063">
    <property type="entry name" value="SAM-dependent_MTases_sf"/>
</dbReference>
<dbReference type="NCBIfam" id="NF011650">
    <property type="entry name" value="PRK15068.1"/>
    <property type="match status" value="1"/>
</dbReference>
<dbReference type="NCBIfam" id="TIGR00452">
    <property type="entry name" value="tRNA 5-methoxyuridine(34)/uridine 5-oxyacetic acid(34) synthase CmoB"/>
    <property type="match status" value="1"/>
</dbReference>
<dbReference type="PANTHER" id="PTHR43464">
    <property type="entry name" value="METHYLTRANSFERASE"/>
    <property type="match status" value="1"/>
</dbReference>
<dbReference type="PANTHER" id="PTHR43464:SF95">
    <property type="entry name" value="TRNA U34 CARBOXYMETHYLTRANSFERASE"/>
    <property type="match status" value="1"/>
</dbReference>
<dbReference type="Pfam" id="PF08003">
    <property type="entry name" value="Methyltransf_9"/>
    <property type="match status" value="1"/>
</dbReference>
<dbReference type="SUPFAM" id="SSF53335">
    <property type="entry name" value="S-adenosyl-L-methionine-dependent methyltransferases"/>
    <property type="match status" value="1"/>
</dbReference>
<protein>
    <recommendedName>
        <fullName evidence="1">tRNA U34 carboxymethyltransferase</fullName>
        <ecNumber evidence="1">2.5.1.-</ecNumber>
    </recommendedName>
</protein>
<reference key="1">
    <citation type="submission" date="2006-09" db="EMBL/GenBank/DDBJ databases">
        <title>Complete sequence of chromosome 1 of Shewanella sp. ANA-3.</title>
        <authorList>
            <person name="Copeland A."/>
            <person name="Lucas S."/>
            <person name="Lapidus A."/>
            <person name="Barry K."/>
            <person name="Detter J.C."/>
            <person name="Glavina del Rio T."/>
            <person name="Hammon N."/>
            <person name="Israni S."/>
            <person name="Dalin E."/>
            <person name="Tice H."/>
            <person name="Pitluck S."/>
            <person name="Chertkov O."/>
            <person name="Brettin T."/>
            <person name="Bruce D."/>
            <person name="Han C."/>
            <person name="Tapia R."/>
            <person name="Gilna P."/>
            <person name="Schmutz J."/>
            <person name="Larimer F."/>
            <person name="Land M."/>
            <person name="Hauser L."/>
            <person name="Kyrpides N."/>
            <person name="Kim E."/>
            <person name="Newman D."/>
            <person name="Salticov C."/>
            <person name="Konstantinidis K."/>
            <person name="Klappenback J."/>
            <person name="Tiedje J."/>
            <person name="Richardson P."/>
        </authorList>
    </citation>
    <scope>NUCLEOTIDE SEQUENCE [LARGE SCALE GENOMIC DNA]</scope>
    <source>
        <strain>ANA-3</strain>
    </source>
</reference>
<gene>
    <name evidence="1" type="primary">cmoB</name>
    <name type="ordered locus">Shewana3_1950</name>
</gene>
<sequence length="330" mass="37824">MISFSSFYQQIADSNLQHWLETLPAILGKWQREHKHGNLPKWEKVLNKLHYPAPDRVDFVSSVTVGTGEQLTPGEKEKLENLLRLFMPWRKGPFHIHGIHIDTEWRSDWKWDRVSPHISPLQNRTVLDVGCGSGYHMWRMLGAGAKRVVGIDPSPLFLCQFEAVKRLSGENHPVHLLPLGIEELPPLDAFDTVFSMGVLYHRRSPIDHLLQLRDQLRMGGELVLETLVIDGDENAVLVPQDRYGKMNNVWFIPSVAALMLWLKKCDFTDIRCVDTDVTALAEQRRTDWMPNESLVEYLDPNDITKTIEGYPAPKRATIIAVKNQPNQDLT</sequence>
<feature type="chain" id="PRO_0000313971" description="tRNA U34 carboxymethyltransferase">
    <location>
        <begin position="1"/>
        <end position="330"/>
    </location>
</feature>
<feature type="binding site" evidence="1">
    <location>
        <position position="91"/>
    </location>
    <ligand>
        <name>carboxy-S-adenosyl-L-methionine</name>
        <dbReference type="ChEBI" id="CHEBI:134278"/>
    </ligand>
</feature>
<feature type="binding site" evidence="1">
    <location>
        <position position="105"/>
    </location>
    <ligand>
        <name>carboxy-S-adenosyl-L-methionine</name>
        <dbReference type="ChEBI" id="CHEBI:134278"/>
    </ligand>
</feature>
<feature type="binding site" evidence="1">
    <location>
        <position position="110"/>
    </location>
    <ligand>
        <name>carboxy-S-adenosyl-L-methionine</name>
        <dbReference type="ChEBI" id="CHEBI:134278"/>
    </ligand>
</feature>
<feature type="binding site" evidence="1">
    <location>
        <position position="130"/>
    </location>
    <ligand>
        <name>carboxy-S-adenosyl-L-methionine</name>
        <dbReference type="ChEBI" id="CHEBI:134278"/>
    </ligand>
</feature>
<feature type="binding site" evidence="1">
    <location>
        <begin position="152"/>
        <end position="154"/>
    </location>
    <ligand>
        <name>carboxy-S-adenosyl-L-methionine</name>
        <dbReference type="ChEBI" id="CHEBI:134278"/>
    </ligand>
</feature>
<feature type="binding site" evidence="1">
    <location>
        <begin position="181"/>
        <end position="182"/>
    </location>
    <ligand>
        <name>carboxy-S-adenosyl-L-methionine</name>
        <dbReference type="ChEBI" id="CHEBI:134278"/>
    </ligand>
</feature>
<feature type="binding site" evidence="1">
    <location>
        <position position="196"/>
    </location>
    <ligand>
        <name>carboxy-S-adenosyl-L-methionine</name>
        <dbReference type="ChEBI" id="CHEBI:134278"/>
    </ligand>
</feature>
<feature type="binding site" evidence="1">
    <location>
        <position position="200"/>
    </location>
    <ligand>
        <name>carboxy-S-adenosyl-L-methionine</name>
        <dbReference type="ChEBI" id="CHEBI:134278"/>
    </ligand>
</feature>
<feature type="binding site" evidence="1">
    <location>
        <position position="315"/>
    </location>
    <ligand>
        <name>carboxy-S-adenosyl-L-methionine</name>
        <dbReference type="ChEBI" id="CHEBI:134278"/>
    </ligand>
</feature>
<comment type="function">
    <text evidence="1">Catalyzes carboxymethyl transfer from carboxy-S-adenosyl-L-methionine (Cx-SAM) to 5-hydroxyuridine (ho5U) to form 5-carboxymethoxyuridine (cmo5U) at position 34 in tRNAs.</text>
</comment>
<comment type="catalytic activity">
    <reaction evidence="1">
        <text>carboxy-S-adenosyl-L-methionine + 5-hydroxyuridine(34) in tRNA = 5-carboxymethoxyuridine(34) in tRNA + S-adenosyl-L-homocysteine + H(+)</text>
        <dbReference type="Rhea" id="RHEA:52848"/>
        <dbReference type="Rhea" id="RHEA-COMP:13381"/>
        <dbReference type="Rhea" id="RHEA-COMP:13383"/>
        <dbReference type="ChEBI" id="CHEBI:15378"/>
        <dbReference type="ChEBI" id="CHEBI:57856"/>
        <dbReference type="ChEBI" id="CHEBI:134278"/>
        <dbReference type="ChEBI" id="CHEBI:136877"/>
        <dbReference type="ChEBI" id="CHEBI:136879"/>
    </reaction>
</comment>
<comment type="subunit">
    <text evidence="1">Homotetramer.</text>
</comment>
<comment type="similarity">
    <text evidence="1">Belongs to the class I-like SAM-binding methyltransferase superfamily. CmoB family.</text>
</comment>
<name>CMOB_SHESA</name>
<organism>
    <name type="scientific">Shewanella sp. (strain ANA-3)</name>
    <dbReference type="NCBI Taxonomy" id="94122"/>
    <lineage>
        <taxon>Bacteria</taxon>
        <taxon>Pseudomonadati</taxon>
        <taxon>Pseudomonadota</taxon>
        <taxon>Gammaproteobacteria</taxon>
        <taxon>Alteromonadales</taxon>
        <taxon>Shewanellaceae</taxon>
        <taxon>Shewanella</taxon>
    </lineage>
</organism>